<feature type="chain" id="PRO_0000061515" description="Cytochrome b">
    <location>
        <begin position="1"/>
        <end position="380"/>
    </location>
</feature>
<feature type="transmembrane region" description="Helical" evidence="2">
    <location>
        <begin position="33"/>
        <end position="53"/>
    </location>
</feature>
<feature type="transmembrane region" description="Helical" evidence="2">
    <location>
        <begin position="77"/>
        <end position="98"/>
    </location>
</feature>
<feature type="transmembrane region" description="Helical" evidence="2">
    <location>
        <begin position="113"/>
        <end position="133"/>
    </location>
</feature>
<feature type="transmembrane region" description="Helical" evidence="2">
    <location>
        <begin position="178"/>
        <end position="198"/>
    </location>
</feature>
<feature type="transmembrane region" description="Helical" evidence="2">
    <location>
        <begin position="226"/>
        <end position="246"/>
    </location>
</feature>
<feature type="transmembrane region" description="Helical" evidence="2">
    <location>
        <begin position="288"/>
        <end position="308"/>
    </location>
</feature>
<feature type="transmembrane region" description="Helical" evidence="2">
    <location>
        <begin position="320"/>
        <end position="340"/>
    </location>
</feature>
<feature type="transmembrane region" description="Helical" evidence="2">
    <location>
        <begin position="347"/>
        <end position="367"/>
    </location>
</feature>
<feature type="binding site" description="axial binding residue" evidence="2">
    <location>
        <position position="83"/>
    </location>
    <ligand>
        <name>heme b</name>
        <dbReference type="ChEBI" id="CHEBI:60344"/>
        <label>b562</label>
    </ligand>
    <ligandPart>
        <name>Fe</name>
        <dbReference type="ChEBI" id="CHEBI:18248"/>
    </ligandPart>
</feature>
<feature type="binding site" description="axial binding residue" evidence="2">
    <location>
        <position position="97"/>
    </location>
    <ligand>
        <name>heme b</name>
        <dbReference type="ChEBI" id="CHEBI:60344"/>
        <label>b566</label>
    </ligand>
    <ligandPart>
        <name>Fe</name>
        <dbReference type="ChEBI" id="CHEBI:18248"/>
    </ligandPart>
</feature>
<feature type="binding site" description="axial binding residue" evidence="2">
    <location>
        <position position="182"/>
    </location>
    <ligand>
        <name>heme b</name>
        <dbReference type="ChEBI" id="CHEBI:60344"/>
        <label>b562</label>
    </ligand>
    <ligandPart>
        <name>Fe</name>
        <dbReference type="ChEBI" id="CHEBI:18248"/>
    </ligandPart>
</feature>
<feature type="binding site" description="axial binding residue" evidence="2">
    <location>
        <position position="196"/>
    </location>
    <ligand>
        <name>heme b</name>
        <dbReference type="ChEBI" id="CHEBI:60344"/>
        <label>b566</label>
    </ligand>
    <ligandPart>
        <name>Fe</name>
        <dbReference type="ChEBI" id="CHEBI:18248"/>
    </ligandPart>
</feature>
<feature type="binding site" evidence="2">
    <location>
        <position position="201"/>
    </location>
    <ligand>
        <name>a ubiquinone</name>
        <dbReference type="ChEBI" id="CHEBI:16389"/>
    </ligand>
</feature>
<feature type="sequence conflict" description="In Ref. 2; AAB01485." evidence="5" ref="2">
    <original>G</original>
    <variation>S</variation>
    <location>
        <position position="38"/>
    </location>
</feature>
<dbReference type="EMBL" id="D58400">
    <property type="protein sequence ID" value="BAA09567.1"/>
    <property type="molecule type" value="Genomic_DNA"/>
</dbReference>
<dbReference type="EMBL" id="M64918">
    <property type="protein sequence ID" value="AAB01485.1"/>
    <property type="molecule type" value="Genomic_DNA"/>
</dbReference>
<dbReference type="RefSeq" id="YP_009027001.1">
    <property type="nucleotide sequence ID" value="NC_024032.1"/>
</dbReference>
<dbReference type="SMR" id="P29671"/>
<dbReference type="Ensembl" id="ENSSTUT00000000036.1">
    <property type="protein sequence ID" value="ENSSTUP00000000014.1"/>
    <property type="gene ID" value="ENSSTUG00000000036.1"/>
</dbReference>
<dbReference type="GeneID" id="19099187"/>
<dbReference type="KEGG" id="stru:19099187"/>
<dbReference type="CTD" id="4519"/>
<dbReference type="GeneTree" id="ENSGT00390000017948"/>
<dbReference type="OMA" id="NISAWWN"/>
<dbReference type="OrthoDB" id="244at2759"/>
<dbReference type="Proteomes" id="UP000472277">
    <property type="component" value="Mitochondrion MT"/>
</dbReference>
<dbReference type="GO" id="GO:0005743">
    <property type="term" value="C:mitochondrial inner membrane"/>
    <property type="evidence" value="ECO:0007669"/>
    <property type="project" value="UniProtKB-SubCell"/>
</dbReference>
<dbReference type="GO" id="GO:0045275">
    <property type="term" value="C:respiratory chain complex III"/>
    <property type="evidence" value="ECO:0007669"/>
    <property type="project" value="InterPro"/>
</dbReference>
<dbReference type="GO" id="GO:0046872">
    <property type="term" value="F:metal ion binding"/>
    <property type="evidence" value="ECO:0007669"/>
    <property type="project" value="UniProtKB-KW"/>
</dbReference>
<dbReference type="GO" id="GO:0008121">
    <property type="term" value="F:ubiquinol-cytochrome-c reductase activity"/>
    <property type="evidence" value="ECO:0007669"/>
    <property type="project" value="InterPro"/>
</dbReference>
<dbReference type="GO" id="GO:0006122">
    <property type="term" value="P:mitochondrial electron transport, ubiquinol to cytochrome c"/>
    <property type="evidence" value="ECO:0007669"/>
    <property type="project" value="TreeGrafter"/>
</dbReference>
<dbReference type="CDD" id="cd00290">
    <property type="entry name" value="cytochrome_b_C"/>
    <property type="match status" value="1"/>
</dbReference>
<dbReference type="CDD" id="cd00284">
    <property type="entry name" value="Cytochrome_b_N"/>
    <property type="match status" value="1"/>
</dbReference>
<dbReference type="FunFam" id="1.20.810.10:FF:000002">
    <property type="entry name" value="Cytochrome b"/>
    <property type="match status" value="1"/>
</dbReference>
<dbReference type="Gene3D" id="1.20.810.10">
    <property type="entry name" value="Cytochrome Bc1 Complex, Chain C"/>
    <property type="match status" value="1"/>
</dbReference>
<dbReference type="InterPro" id="IPR005798">
    <property type="entry name" value="Cyt_b/b6_C"/>
</dbReference>
<dbReference type="InterPro" id="IPR036150">
    <property type="entry name" value="Cyt_b/b6_C_sf"/>
</dbReference>
<dbReference type="InterPro" id="IPR005797">
    <property type="entry name" value="Cyt_b/b6_N"/>
</dbReference>
<dbReference type="InterPro" id="IPR027387">
    <property type="entry name" value="Cytb/b6-like_sf"/>
</dbReference>
<dbReference type="InterPro" id="IPR030689">
    <property type="entry name" value="Cytochrome_b"/>
</dbReference>
<dbReference type="InterPro" id="IPR048260">
    <property type="entry name" value="Cytochrome_b_C_euk/bac"/>
</dbReference>
<dbReference type="InterPro" id="IPR048259">
    <property type="entry name" value="Cytochrome_b_N_euk/bac"/>
</dbReference>
<dbReference type="InterPro" id="IPR016174">
    <property type="entry name" value="Di-haem_cyt_TM"/>
</dbReference>
<dbReference type="PANTHER" id="PTHR19271">
    <property type="entry name" value="CYTOCHROME B"/>
    <property type="match status" value="1"/>
</dbReference>
<dbReference type="PANTHER" id="PTHR19271:SF16">
    <property type="entry name" value="CYTOCHROME B"/>
    <property type="match status" value="1"/>
</dbReference>
<dbReference type="Pfam" id="PF00032">
    <property type="entry name" value="Cytochrom_B_C"/>
    <property type="match status" value="1"/>
</dbReference>
<dbReference type="Pfam" id="PF00033">
    <property type="entry name" value="Cytochrome_B"/>
    <property type="match status" value="1"/>
</dbReference>
<dbReference type="PIRSF" id="PIRSF038885">
    <property type="entry name" value="COB"/>
    <property type="match status" value="1"/>
</dbReference>
<dbReference type="SUPFAM" id="SSF81648">
    <property type="entry name" value="a domain/subunit of cytochrome bc1 complex (Ubiquinol-cytochrome c reductase)"/>
    <property type="match status" value="1"/>
</dbReference>
<dbReference type="SUPFAM" id="SSF81342">
    <property type="entry name" value="Transmembrane di-heme cytochromes"/>
    <property type="match status" value="1"/>
</dbReference>
<dbReference type="PROSITE" id="PS51003">
    <property type="entry name" value="CYTB_CTER"/>
    <property type="match status" value="1"/>
</dbReference>
<dbReference type="PROSITE" id="PS51002">
    <property type="entry name" value="CYTB_NTER"/>
    <property type="match status" value="1"/>
</dbReference>
<protein>
    <recommendedName>
        <fullName>Cytochrome b</fullName>
    </recommendedName>
    <alternativeName>
        <fullName>Complex III subunit 3</fullName>
    </alternativeName>
    <alternativeName>
        <fullName>Complex III subunit III</fullName>
    </alternativeName>
    <alternativeName>
        <fullName>Cytochrome b-c1 complex subunit 3</fullName>
    </alternativeName>
    <alternativeName>
        <fullName>Ubiquinol-cytochrome-c reductase complex cytochrome b subunit</fullName>
    </alternativeName>
</protein>
<reference key="1">
    <citation type="submission" date="1995-09" db="EMBL/GenBank/DDBJ databases">
        <authorList>
            <person name="Matsuda M."/>
            <person name="Oshiro T."/>
            <person name="Kobayashi T."/>
            <person name="Ueshima R."/>
            <person name="Yonekawa H."/>
            <person name="Sakaizumi M."/>
        </authorList>
    </citation>
    <scope>NUCLEOTIDE SEQUENCE [GENOMIC DNA]</scope>
</reference>
<reference key="2">
    <citation type="journal article" date="1991" name="Mol. Biol. Evol.">
        <title>Phylogenetic relationships of neopterygian fishes, inferred from mitochondrial DNA sequences.</title>
        <authorList>
            <person name="Normark B.B."/>
            <person name="McCune A.R."/>
            <person name="Harrison R.G."/>
        </authorList>
    </citation>
    <scope>NUCLEOTIDE SEQUENCE [GENOMIC DNA] OF 33-134</scope>
</reference>
<sequence>MANLRKTHPLLKIANDALVDLPAPSNISVWWNFGSLLGLCLATQILTGLFLAMHYTSDISTAFSSVCHICRDVSYGWLIRNIHANGASFFFICIYMHIARGLYYGSYLYKETWNIGVVLLLLTMMTAFVGYVLPWGQMSFWGATVITNLLSAVPYVGGALVQWIWGGFSVDNATLTRFFAFHFLFPFVIAAATVLHLLFLHETGSNNPAGINSDADKISFHPYFSYKDLLGFVAMLLGLTSLALFAPNLLGDPDNFTPANPLVTPPHIKPEWYFLFAYAILRSIPNKLGGVLALLFSILVLMVVPILHTSKQRGLTFRPLTQFLFWTLVADMLILTWIGGMPVEHPFIIIGQVASVIYFTIFLVLAPLAGWAENKALEWT</sequence>
<geneLocation type="mitochondrion"/>
<accession>P29671</accession>
<accession>Q35940</accession>
<name>CYB_SALTR</name>
<organism>
    <name type="scientific">Salmo trutta</name>
    <name type="common">Brown trout</name>
    <dbReference type="NCBI Taxonomy" id="8032"/>
    <lineage>
        <taxon>Eukaryota</taxon>
        <taxon>Metazoa</taxon>
        <taxon>Chordata</taxon>
        <taxon>Craniata</taxon>
        <taxon>Vertebrata</taxon>
        <taxon>Euteleostomi</taxon>
        <taxon>Actinopterygii</taxon>
        <taxon>Neopterygii</taxon>
        <taxon>Teleostei</taxon>
        <taxon>Protacanthopterygii</taxon>
        <taxon>Salmoniformes</taxon>
        <taxon>Salmonidae</taxon>
        <taxon>Salmoninae</taxon>
        <taxon>Salmo</taxon>
    </lineage>
</organism>
<gene>
    <name type="primary">mt-cyb</name>
    <name type="synonym">cob</name>
    <name type="synonym">cytb</name>
    <name type="synonym">mtcyb</name>
</gene>
<comment type="function">
    <text evidence="2">Component of the ubiquinol-cytochrome c reductase complex (complex III or cytochrome b-c1 complex) that is part of the mitochondrial respiratory chain. The b-c1 complex mediates electron transfer from ubiquinol to cytochrome c. Contributes to the generation of a proton gradient across the mitochondrial membrane that is then used for ATP synthesis.</text>
</comment>
<comment type="cofactor">
    <cofactor evidence="2">
        <name>heme b</name>
        <dbReference type="ChEBI" id="CHEBI:60344"/>
    </cofactor>
    <text evidence="2">Binds 2 heme b groups non-covalently.</text>
</comment>
<comment type="subunit">
    <text evidence="2">The cytochrome bc1 complex contains 3 respiratory subunits (MT-CYB, CYC1 and UQCRFS1), 2 core proteins (UQCRC1 and UQCRC2) and probably 6 low-molecular weight proteins.</text>
</comment>
<comment type="subcellular location">
    <subcellularLocation>
        <location evidence="2">Mitochondrion inner membrane</location>
        <topology evidence="2">Multi-pass membrane protein</topology>
    </subcellularLocation>
</comment>
<comment type="miscellaneous">
    <text evidence="1">Heme 1 (or BL or b562) is low-potential and absorbs at about 562 nm, and heme 2 (or BH or b566) is high-potential and absorbs at about 566 nm.</text>
</comment>
<comment type="similarity">
    <text evidence="3 4">Belongs to the cytochrome b family.</text>
</comment>
<comment type="caution">
    <text evidence="2">The full-length protein contains only eight transmembrane helices, not nine as predicted by bioinformatics tools.</text>
</comment>
<evidence type="ECO:0000250" key="1"/>
<evidence type="ECO:0000250" key="2">
    <source>
        <dbReference type="UniProtKB" id="P00157"/>
    </source>
</evidence>
<evidence type="ECO:0000255" key="3">
    <source>
        <dbReference type="PROSITE-ProRule" id="PRU00967"/>
    </source>
</evidence>
<evidence type="ECO:0000255" key="4">
    <source>
        <dbReference type="PROSITE-ProRule" id="PRU00968"/>
    </source>
</evidence>
<evidence type="ECO:0000305" key="5"/>
<keyword id="KW-0249">Electron transport</keyword>
<keyword id="KW-0349">Heme</keyword>
<keyword id="KW-0408">Iron</keyword>
<keyword id="KW-0472">Membrane</keyword>
<keyword id="KW-0479">Metal-binding</keyword>
<keyword id="KW-0496">Mitochondrion</keyword>
<keyword id="KW-0999">Mitochondrion inner membrane</keyword>
<keyword id="KW-1185">Reference proteome</keyword>
<keyword id="KW-0679">Respiratory chain</keyword>
<keyword id="KW-0812">Transmembrane</keyword>
<keyword id="KW-1133">Transmembrane helix</keyword>
<keyword id="KW-0813">Transport</keyword>
<keyword id="KW-0830">Ubiquinone</keyword>
<proteinExistence type="inferred from homology"/>